<organism>
    <name type="scientific">Trichormus variabilis (strain ATCC 29413 / PCC 7937)</name>
    <name type="common">Anabaena variabilis</name>
    <dbReference type="NCBI Taxonomy" id="240292"/>
    <lineage>
        <taxon>Bacteria</taxon>
        <taxon>Bacillati</taxon>
        <taxon>Cyanobacteriota</taxon>
        <taxon>Cyanophyceae</taxon>
        <taxon>Nostocales</taxon>
        <taxon>Nostocaceae</taxon>
        <taxon>Trichormus</taxon>
    </lineage>
</organism>
<feature type="chain" id="PRO_1000057677" description="4-hydroxy-tetrahydrodipicolinate reductase">
    <location>
        <begin position="1"/>
        <end position="278"/>
    </location>
</feature>
<feature type="active site" description="Proton donor/acceptor" evidence="1">
    <location>
        <position position="167"/>
    </location>
</feature>
<feature type="active site" description="Proton donor" evidence="1">
    <location>
        <position position="171"/>
    </location>
</feature>
<feature type="binding site" evidence="1">
    <location>
        <begin position="13"/>
        <end position="18"/>
    </location>
    <ligand>
        <name>NAD(+)</name>
        <dbReference type="ChEBI" id="CHEBI:57540"/>
    </ligand>
</feature>
<feature type="binding site" evidence="1">
    <location>
        <begin position="111"/>
        <end position="113"/>
    </location>
    <ligand>
        <name>NAD(+)</name>
        <dbReference type="ChEBI" id="CHEBI:57540"/>
    </ligand>
</feature>
<feature type="binding site" evidence="1">
    <location>
        <position position="168"/>
    </location>
    <ligand>
        <name>(S)-2,3,4,5-tetrahydrodipicolinate</name>
        <dbReference type="ChEBI" id="CHEBI:16845"/>
    </ligand>
</feature>
<feature type="binding site" evidence="1">
    <location>
        <begin position="177"/>
        <end position="178"/>
    </location>
    <ligand>
        <name>(S)-2,3,4,5-tetrahydrodipicolinate</name>
        <dbReference type="ChEBI" id="CHEBI:16845"/>
    </ligand>
</feature>
<feature type="strand" evidence="3">
    <location>
        <begin position="7"/>
        <end position="12"/>
    </location>
</feature>
<feature type="turn" evidence="3">
    <location>
        <begin position="13"/>
        <end position="15"/>
    </location>
</feature>
<feature type="helix" evidence="3">
    <location>
        <begin position="17"/>
        <end position="28"/>
    </location>
</feature>
<feature type="strand" evidence="3">
    <location>
        <begin position="32"/>
        <end position="38"/>
    </location>
</feature>
<feature type="helix" evidence="3">
    <location>
        <begin position="42"/>
        <end position="44"/>
    </location>
</feature>
<feature type="strand" evidence="3">
    <location>
        <begin position="45"/>
        <end position="48"/>
    </location>
</feature>
<feature type="helix" evidence="3">
    <location>
        <begin position="49"/>
        <end position="52"/>
    </location>
</feature>
<feature type="helix" evidence="3">
    <location>
        <begin position="67"/>
        <end position="75"/>
    </location>
</feature>
<feature type="strand" evidence="3">
    <location>
        <begin position="79"/>
        <end position="81"/>
    </location>
</feature>
<feature type="strand" evidence="3">
    <location>
        <begin position="84"/>
        <end position="87"/>
    </location>
</feature>
<feature type="helix" evidence="3">
    <location>
        <begin position="91"/>
        <end position="103"/>
    </location>
</feature>
<feature type="strand" evidence="3">
    <location>
        <begin position="107"/>
        <end position="112"/>
    </location>
</feature>
<feature type="helix" evidence="3">
    <location>
        <begin position="117"/>
        <end position="130"/>
    </location>
</feature>
<feature type="strand" evidence="3">
    <location>
        <begin position="134"/>
        <end position="138"/>
    </location>
</feature>
<feature type="helix" evidence="3">
    <location>
        <begin position="142"/>
        <end position="155"/>
    </location>
</feature>
<feature type="strand" evidence="3">
    <location>
        <begin position="159"/>
        <end position="167"/>
    </location>
</feature>
<feature type="helix" evidence="3">
    <location>
        <begin position="177"/>
        <end position="187"/>
    </location>
</feature>
<feature type="turn" evidence="3">
    <location>
        <begin position="205"/>
        <end position="208"/>
    </location>
</feature>
<feature type="strand" evidence="3">
    <location>
        <begin position="217"/>
        <end position="222"/>
    </location>
</feature>
<feature type="strand" evidence="3">
    <location>
        <begin position="228"/>
        <end position="236"/>
    </location>
</feature>
<feature type="strand" evidence="3">
    <location>
        <begin position="239"/>
        <end position="250"/>
    </location>
</feature>
<feature type="helix" evidence="3">
    <location>
        <begin position="254"/>
        <end position="264"/>
    </location>
</feature>
<feature type="strand" evidence="3">
    <location>
        <begin position="268"/>
        <end position="272"/>
    </location>
</feature>
<feature type="helix" evidence="3">
    <location>
        <begin position="274"/>
        <end position="276"/>
    </location>
</feature>
<reference key="1">
    <citation type="journal article" date="2014" name="Stand. Genomic Sci.">
        <title>Complete genome sequence of Anabaena variabilis ATCC 29413.</title>
        <authorList>
            <person name="Thiel T."/>
            <person name="Pratte B.S."/>
            <person name="Zhong J."/>
            <person name="Goodwin L."/>
            <person name="Copeland A."/>
            <person name="Lucas S."/>
            <person name="Han C."/>
            <person name="Pitluck S."/>
            <person name="Land M.L."/>
            <person name="Kyrpides N.C."/>
            <person name="Woyke T."/>
        </authorList>
    </citation>
    <scope>NUCLEOTIDE SEQUENCE [LARGE SCALE GENOMIC DNA]</scope>
    <source>
        <strain>ATCC 29413 / PCC 7937</strain>
    </source>
</reference>
<evidence type="ECO:0000255" key="1">
    <source>
        <dbReference type="HAMAP-Rule" id="MF_00102"/>
    </source>
</evidence>
<evidence type="ECO:0000305" key="2"/>
<evidence type="ECO:0007829" key="3">
    <source>
        <dbReference type="PDB" id="5KT0"/>
    </source>
</evidence>
<proteinExistence type="evidence at protein level"/>
<accession>Q3MFY8</accession>
<gene>
    <name evidence="1" type="primary">dapB</name>
    <name type="ordered locus">Ava_0474</name>
</gene>
<comment type="function">
    <text evidence="1">Catalyzes the conversion of 4-hydroxy-tetrahydrodipicolinate (HTPA) to tetrahydrodipicolinate.</text>
</comment>
<comment type="catalytic activity">
    <reaction evidence="1">
        <text>(S)-2,3,4,5-tetrahydrodipicolinate + NAD(+) + H2O = (2S,4S)-4-hydroxy-2,3,4,5-tetrahydrodipicolinate + NADH + H(+)</text>
        <dbReference type="Rhea" id="RHEA:35323"/>
        <dbReference type="ChEBI" id="CHEBI:15377"/>
        <dbReference type="ChEBI" id="CHEBI:15378"/>
        <dbReference type="ChEBI" id="CHEBI:16845"/>
        <dbReference type="ChEBI" id="CHEBI:57540"/>
        <dbReference type="ChEBI" id="CHEBI:57945"/>
        <dbReference type="ChEBI" id="CHEBI:67139"/>
        <dbReference type="EC" id="1.17.1.8"/>
    </reaction>
</comment>
<comment type="catalytic activity">
    <reaction evidence="1">
        <text>(S)-2,3,4,5-tetrahydrodipicolinate + NADP(+) + H2O = (2S,4S)-4-hydroxy-2,3,4,5-tetrahydrodipicolinate + NADPH + H(+)</text>
        <dbReference type="Rhea" id="RHEA:35331"/>
        <dbReference type="ChEBI" id="CHEBI:15377"/>
        <dbReference type="ChEBI" id="CHEBI:15378"/>
        <dbReference type="ChEBI" id="CHEBI:16845"/>
        <dbReference type="ChEBI" id="CHEBI:57783"/>
        <dbReference type="ChEBI" id="CHEBI:58349"/>
        <dbReference type="ChEBI" id="CHEBI:67139"/>
        <dbReference type="EC" id="1.17.1.8"/>
    </reaction>
</comment>
<comment type="pathway">
    <text evidence="1">Amino-acid biosynthesis; L-lysine biosynthesis via DAP pathway; (S)-tetrahydrodipicolinate from L-aspartate: step 4/4.</text>
</comment>
<comment type="subcellular location">
    <subcellularLocation>
        <location evidence="1">Cytoplasm</location>
    </subcellularLocation>
</comment>
<comment type="similarity">
    <text evidence="1">Belongs to the DapB family.</text>
</comment>
<comment type="caution">
    <text evidence="2">Was originally thought to be a dihydrodipicolinate reductase (DHDPR), catalyzing the conversion of dihydrodipicolinate to tetrahydrodipicolinate. However, it was shown in E.coli that the substrate of the enzymatic reaction is not dihydrodipicolinate (DHDP) but in fact (2S,4S)-4-hydroxy-2,3,4,5-tetrahydrodipicolinic acid (HTPA), the product released by the DapA-catalyzed reaction.</text>
</comment>
<name>DAPB_TRIV2</name>
<protein>
    <recommendedName>
        <fullName evidence="1">4-hydroxy-tetrahydrodipicolinate reductase</fullName>
        <shortName evidence="1">HTPA reductase</shortName>
        <ecNumber evidence="1">1.17.1.8</ecNumber>
    </recommendedName>
</protein>
<sequence length="278" mass="29464">MTNQAPIPVIVNGAAGKMGREVVKAIAQAPDLNLLGAIDSSPEHQGKDAGELAGLSEPLEVPITNQLEPMLGYVAGERQGPPGVIVDFTHPDSVYDNVRSAIAYGIRPVVGTTGLSPAQIQNLADFAEKASTGCLIIPNFSIGMVLLQQAAVTASQYFDHVEIIELHHNQKADAPSGTAIQTAELLAELGKTFNSAIVEETEKIPGARGSLAGEGIRIHSVRLPGLIAHQEVIFGAPGQIYTLRHDTSDRACYMPGVLLAIRKVLQLKSLVYGLEKIL</sequence>
<keyword id="KW-0002">3D-structure</keyword>
<keyword id="KW-0028">Amino-acid biosynthesis</keyword>
<keyword id="KW-0963">Cytoplasm</keyword>
<keyword id="KW-0220">Diaminopimelate biosynthesis</keyword>
<keyword id="KW-0457">Lysine biosynthesis</keyword>
<keyword id="KW-0520">NAD</keyword>
<keyword id="KW-0521">NADP</keyword>
<keyword id="KW-0560">Oxidoreductase</keyword>
<dbReference type="EC" id="1.17.1.8" evidence="1"/>
<dbReference type="EMBL" id="CP000117">
    <property type="protein sequence ID" value="ABA20098.1"/>
    <property type="molecule type" value="Genomic_DNA"/>
</dbReference>
<dbReference type="PDB" id="5KT0">
    <property type="method" value="X-ray"/>
    <property type="resolution" value="2.83 A"/>
    <property type="chains" value="A=2-278"/>
</dbReference>
<dbReference type="PDBsum" id="5KT0"/>
<dbReference type="SMR" id="Q3MFY8"/>
<dbReference type="STRING" id="240292.Ava_0474"/>
<dbReference type="KEGG" id="ava:Ava_0474"/>
<dbReference type="eggNOG" id="COG0289">
    <property type="taxonomic scope" value="Bacteria"/>
</dbReference>
<dbReference type="HOGENOM" id="CLU_047479_0_1_3"/>
<dbReference type="BRENDA" id="4.3.3.7">
    <property type="organism ID" value="322"/>
</dbReference>
<dbReference type="UniPathway" id="UPA00034">
    <property type="reaction ID" value="UER00018"/>
</dbReference>
<dbReference type="Proteomes" id="UP000002533">
    <property type="component" value="Chromosome"/>
</dbReference>
<dbReference type="GO" id="GO:0005829">
    <property type="term" value="C:cytosol"/>
    <property type="evidence" value="ECO:0007669"/>
    <property type="project" value="TreeGrafter"/>
</dbReference>
<dbReference type="GO" id="GO:0008839">
    <property type="term" value="F:4-hydroxy-tetrahydrodipicolinate reductase"/>
    <property type="evidence" value="ECO:0007669"/>
    <property type="project" value="UniProtKB-EC"/>
</dbReference>
<dbReference type="GO" id="GO:0051287">
    <property type="term" value="F:NAD binding"/>
    <property type="evidence" value="ECO:0007669"/>
    <property type="project" value="UniProtKB-UniRule"/>
</dbReference>
<dbReference type="GO" id="GO:0050661">
    <property type="term" value="F:NADP binding"/>
    <property type="evidence" value="ECO:0007669"/>
    <property type="project" value="UniProtKB-UniRule"/>
</dbReference>
<dbReference type="GO" id="GO:0016726">
    <property type="term" value="F:oxidoreductase activity, acting on CH or CH2 groups, NAD or NADP as acceptor"/>
    <property type="evidence" value="ECO:0007669"/>
    <property type="project" value="UniProtKB-UniRule"/>
</dbReference>
<dbReference type="GO" id="GO:0019877">
    <property type="term" value="P:diaminopimelate biosynthetic process"/>
    <property type="evidence" value="ECO:0007669"/>
    <property type="project" value="UniProtKB-UniRule"/>
</dbReference>
<dbReference type="GO" id="GO:0009089">
    <property type="term" value="P:lysine biosynthetic process via diaminopimelate"/>
    <property type="evidence" value="ECO:0007669"/>
    <property type="project" value="UniProtKB-UniRule"/>
</dbReference>
<dbReference type="CDD" id="cd02274">
    <property type="entry name" value="DHDPR_N"/>
    <property type="match status" value="1"/>
</dbReference>
<dbReference type="FunFam" id="3.30.360.10:FF:000009">
    <property type="entry name" value="4-hydroxy-tetrahydrodipicolinate reductase"/>
    <property type="match status" value="1"/>
</dbReference>
<dbReference type="Gene3D" id="3.30.360.10">
    <property type="entry name" value="Dihydrodipicolinate Reductase, domain 2"/>
    <property type="match status" value="1"/>
</dbReference>
<dbReference type="Gene3D" id="3.40.50.720">
    <property type="entry name" value="NAD(P)-binding Rossmann-like Domain"/>
    <property type="match status" value="1"/>
</dbReference>
<dbReference type="HAMAP" id="MF_00102">
    <property type="entry name" value="DapB"/>
    <property type="match status" value="1"/>
</dbReference>
<dbReference type="InterPro" id="IPR022663">
    <property type="entry name" value="DapB_C"/>
</dbReference>
<dbReference type="InterPro" id="IPR000846">
    <property type="entry name" value="DapB_N"/>
</dbReference>
<dbReference type="InterPro" id="IPR022664">
    <property type="entry name" value="DapB_N_CS"/>
</dbReference>
<dbReference type="InterPro" id="IPR023940">
    <property type="entry name" value="DHDPR_bac"/>
</dbReference>
<dbReference type="InterPro" id="IPR036291">
    <property type="entry name" value="NAD(P)-bd_dom_sf"/>
</dbReference>
<dbReference type="NCBIfam" id="TIGR00036">
    <property type="entry name" value="dapB"/>
    <property type="match status" value="1"/>
</dbReference>
<dbReference type="PANTHER" id="PTHR20836:SF0">
    <property type="entry name" value="4-HYDROXY-TETRAHYDRODIPICOLINATE REDUCTASE 1, CHLOROPLASTIC-RELATED"/>
    <property type="match status" value="1"/>
</dbReference>
<dbReference type="PANTHER" id="PTHR20836">
    <property type="entry name" value="DIHYDRODIPICOLINATE REDUCTASE"/>
    <property type="match status" value="1"/>
</dbReference>
<dbReference type="Pfam" id="PF05173">
    <property type="entry name" value="DapB_C"/>
    <property type="match status" value="1"/>
</dbReference>
<dbReference type="Pfam" id="PF01113">
    <property type="entry name" value="DapB_N"/>
    <property type="match status" value="1"/>
</dbReference>
<dbReference type="PIRSF" id="PIRSF000161">
    <property type="entry name" value="DHPR"/>
    <property type="match status" value="1"/>
</dbReference>
<dbReference type="SUPFAM" id="SSF55347">
    <property type="entry name" value="Glyceraldehyde-3-phosphate dehydrogenase-like, C-terminal domain"/>
    <property type="match status" value="1"/>
</dbReference>
<dbReference type="SUPFAM" id="SSF51735">
    <property type="entry name" value="NAD(P)-binding Rossmann-fold domains"/>
    <property type="match status" value="1"/>
</dbReference>
<dbReference type="PROSITE" id="PS01298">
    <property type="entry name" value="DAPB"/>
    <property type="match status" value="1"/>
</dbReference>